<feature type="chain" id="PRO_1000118390" description="Peptidyl-tRNA hydrolase">
    <location>
        <begin position="1"/>
        <end position="194"/>
    </location>
</feature>
<feature type="active site" description="Proton acceptor" evidence="1">
    <location>
        <position position="21"/>
    </location>
</feature>
<feature type="binding site" evidence="1">
    <location>
        <position position="16"/>
    </location>
    <ligand>
        <name>tRNA</name>
        <dbReference type="ChEBI" id="CHEBI:17843"/>
    </ligand>
</feature>
<feature type="binding site" evidence="1">
    <location>
        <position position="67"/>
    </location>
    <ligand>
        <name>tRNA</name>
        <dbReference type="ChEBI" id="CHEBI:17843"/>
    </ligand>
</feature>
<feature type="binding site" evidence="1">
    <location>
        <position position="69"/>
    </location>
    <ligand>
        <name>tRNA</name>
        <dbReference type="ChEBI" id="CHEBI:17843"/>
    </ligand>
</feature>
<feature type="binding site" evidence="1">
    <location>
        <position position="115"/>
    </location>
    <ligand>
        <name>tRNA</name>
        <dbReference type="ChEBI" id="CHEBI:17843"/>
    </ligand>
</feature>
<feature type="site" description="Discriminates between blocked and unblocked aminoacyl-tRNA" evidence="1">
    <location>
        <position position="11"/>
    </location>
</feature>
<feature type="site" description="Stabilizes the basic form of H active site to accept a proton" evidence="1">
    <location>
        <position position="94"/>
    </location>
</feature>
<keyword id="KW-0963">Cytoplasm</keyword>
<keyword id="KW-0378">Hydrolase</keyword>
<keyword id="KW-1185">Reference proteome</keyword>
<keyword id="KW-0694">RNA-binding</keyword>
<keyword id="KW-0820">tRNA-binding</keyword>
<reference key="1">
    <citation type="journal article" date="2009" name="PLoS Genet.">
        <title>Organised genome dynamics in the Escherichia coli species results in highly diverse adaptive paths.</title>
        <authorList>
            <person name="Touchon M."/>
            <person name="Hoede C."/>
            <person name="Tenaillon O."/>
            <person name="Barbe V."/>
            <person name="Baeriswyl S."/>
            <person name="Bidet P."/>
            <person name="Bingen E."/>
            <person name="Bonacorsi S."/>
            <person name="Bouchier C."/>
            <person name="Bouvet O."/>
            <person name="Calteau A."/>
            <person name="Chiapello H."/>
            <person name="Clermont O."/>
            <person name="Cruveiller S."/>
            <person name="Danchin A."/>
            <person name="Diard M."/>
            <person name="Dossat C."/>
            <person name="Karoui M.E."/>
            <person name="Frapy E."/>
            <person name="Garry L."/>
            <person name="Ghigo J.M."/>
            <person name="Gilles A.M."/>
            <person name="Johnson J."/>
            <person name="Le Bouguenec C."/>
            <person name="Lescat M."/>
            <person name="Mangenot S."/>
            <person name="Martinez-Jehanne V."/>
            <person name="Matic I."/>
            <person name="Nassif X."/>
            <person name="Oztas S."/>
            <person name="Petit M.A."/>
            <person name="Pichon C."/>
            <person name="Rouy Z."/>
            <person name="Ruf C.S."/>
            <person name="Schneider D."/>
            <person name="Tourret J."/>
            <person name="Vacherie B."/>
            <person name="Vallenet D."/>
            <person name="Medigue C."/>
            <person name="Rocha E.P.C."/>
            <person name="Denamur E."/>
        </authorList>
    </citation>
    <scope>NUCLEOTIDE SEQUENCE [LARGE SCALE GENOMIC DNA]</scope>
    <source>
        <strain>55989 / EAEC</strain>
    </source>
</reference>
<sequence length="194" mass="21082">MTIKLIVGLANPGAEYAATRHNAGAWFVDLLAERLRAPLREEAKFFGYTSRVTLGGEDVRLLVPTTFMNLSGKAVAAMASFFRINPDEILVAHDELDLPPGVAKFKLGGGHGGHNGLKDIISKLGNNPNFHRLRIGIGHPGDKNKVVGFVLGKPPVSEQKLIDEAIDEAARCTEMWFTDGLTKATNRLHAFKAQ</sequence>
<gene>
    <name evidence="1" type="primary">pth</name>
    <name type="ordered locus">EC55989_1300</name>
</gene>
<organism>
    <name type="scientific">Escherichia coli (strain 55989 / EAEC)</name>
    <dbReference type="NCBI Taxonomy" id="585055"/>
    <lineage>
        <taxon>Bacteria</taxon>
        <taxon>Pseudomonadati</taxon>
        <taxon>Pseudomonadota</taxon>
        <taxon>Gammaproteobacteria</taxon>
        <taxon>Enterobacterales</taxon>
        <taxon>Enterobacteriaceae</taxon>
        <taxon>Escherichia</taxon>
    </lineage>
</organism>
<proteinExistence type="inferred from homology"/>
<protein>
    <recommendedName>
        <fullName evidence="1">Peptidyl-tRNA hydrolase</fullName>
        <shortName evidence="1">Pth</shortName>
        <ecNumber evidence="1">3.1.1.29</ecNumber>
    </recommendedName>
</protein>
<evidence type="ECO:0000255" key="1">
    <source>
        <dbReference type="HAMAP-Rule" id="MF_00083"/>
    </source>
</evidence>
<comment type="function">
    <text evidence="1">Hydrolyzes ribosome-free peptidyl-tRNAs (with 1 or more amino acids incorporated), which drop off the ribosome during protein synthesis, or as a result of ribosome stalling.</text>
</comment>
<comment type="function">
    <text evidence="1">Catalyzes the release of premature peptidyl moieties from peptidyl-tRNA molecules trapped in stalled 50S ribosomal subunits, and thus maintains levels of free tRNAs and 50S ribosomes.</text>
</comment>
<comment type="catalytic activity">
    <reaction evidence="1">
        <text>an N-acyl-L-alpha-aminoacyl-tRNA + H2O = an N-acyl-L-amino acid + a tRNA + H(+)</text>
        <dbReference type="Rhea" id="RHEA:54448"/>
        <dbReference type="Rhea" id="RHEA-COMP:10123"/>
        <dbReference type="Rhea" id="RHEA-COMP:13883"/>
        <dbReference type="ChEBI" id="CHEBI:15377"/>
        <dbReference type="ChEBI" id="CHEBI:15378"/>
        <dbReference type="ChEBI" id="CHEBI:59874"/>
        <dbReference type="ChEBI" id="CHEBI:78442"/>
        <dbReference type="ChEBI" id="CHEBI:138191"/>
        <dbReference type="EC" id="3.1.1.29"/>
    </reaction>
</comment>
<comment type="subunit">
    <text evidence="1">Monomer.</text>
</comment>
<comment type="subcellular location">
    <subcellularLocation>
        <location evidence="1">Cytoplasm</location>
    </subcellularLocation>
</comment>
<comment type="similarity">
    <text evidence="1">Belongs to the PTH family.</text>
</comment>
<accession>B7LGW4</accession>
<dbReference type="EC" id="3.1.1.29" evidence="1"/>
<dbReference type="EMBL" id="CU928145">
    <property type="protein sequence ID" value="CAU97158.1"/>
    <property type="molecule type" value="Genomic_DNA"/>
</dbReference>
<dbReference type="RefSeq" id="WP_000152933.1">
    <property type="nucleotide sequence ID" value="NC_011748.1"/>
</dbReference>
<dbReference type="SMR" id="B7LGW4"/>
<dbReference type="GeneID" id="93775269"/>
<dbReference type="KEGG" id="eck:EC55989_1300"/>
<dbReference type="HOGENOM" id="CLU_062456_3_1_6"/>
<dbReference type="Proteomes" id="UP000000746">
    <property type="component" value="Chromosome"/>
</dbReference>
<dbReference type="GO" id="GO:0005737">
    <property type="term" value="C:cytoplasm"/>
    <property type="evidence" value="ECO:0007669"/>
    <property type="project" value="UniProtKB-SubCell"/>
</dbReference>
<dbReference type="GO" id="GO:0004045">
    <property type="term" value="F:peptidyl-tRNA hydrolase activity"/>
    <property type="evidence" value="ECO:0007669"/>
    <property type="project" value="UniProtKB-UniRule"/>
</dbReference>
<dbReference type="GO" id="GO:0000049">
    <property type="term" value="F:tRNA binding"/>
    <property type="evidence" value="ECO:0007669"/>
    <property type="project" value="UniProtKB-UniRule"/>
</dbReference>
<dbReference type="GO" id="GO:0006515">
    <property type="term" value="P:protein quality control for misfolded or incompletely synthesized proteins"/>
    <property type="evidence" value="ECO:0007669"/>
    <property type="project" value="UniProtKB-UniRule"/>
</dbReference>
<dbReference type="GO" id="GO:0072344">
    <property type="term" value="P:rescue of stalled ribosome"/>
    <property type="evidence" value="ECO:0007669"/>
    <property type="project" value="UniProtKB-UniRule"/>
</dbReference>
<dbReference type="CDD" id="cd00462">
    <property type="entry name" value="PTH"/>
    <property type="match status" value="1"/>
</dbReference>
<dbReference type="FunFam" id="3.40.50.1470:FF:000001">
    <property type="entry name" value="Peptidyl-tRNA hydrolase"/>
    <property type="match status" value="1"/>
</dbReference>
<dbReference type="Gene3D" id="3.40.50.1470">
    <property type="entry name" value="Peptidyl-tRNA hydrolase"/>
    <property type="match status" value="1"/>
</dbReference>
<dbReference type="HAMAP" id="MF_00083">
    <property type="entry name" value="Pept_tRNA_hydro_bact"/>
    <property type="match status" value="1"/>
</dbReference>
<dbReference type="InterPro" id="IPR001328">
    <property type="entry name" value="Pept_tRNA_hydro"/>
</dbReference>
<dbReference type="InterPro" id="IPR018171">
    <property type="entry name" value="Pept_tRNA_hydro_CS"/>
</dbReference>
<dbReference type="InterPro" id="IPR036416">
    <property type="entry name" value="Pept_tRNA_hydro_sf"/>
</dbReference>
<dbReference type="NCBIfam" id="TIGR00447">
    <property type="entry name" value="pth"/>
    <property type="match status" value="1"/>
</dbReference>
<dbReference type="PANTHER" id="PTHR17224">
    <property type="entry name" value="PEPTIDYL-TRNA HYDROLASE"/>
    <property type="match status" value="1"/>
</dbReference>
<dbReference type="PANTHER" id="PTHR17224:SF1">
    <property type="entry name" value="PEPTIDYL-TRNA HYDROLASE"/>
    <property type="match status" value="1"/>
</dbReference>
<dbReference type="Pfam" id="PF01195">
    <property type="entry name" value="Pept_tRNA_hydro"/>
    <property type="match status" value="1"/>
</dbReference>
<dbReference type="SUPFAM" id="SSF53178">
    <property type="entry name" value="Peptidyl-tRNA hydrolase-like"/>
    <property type="match status" value="1"/>
</dbReference>
<dbReference type="PROSITE" id="PS01195">
    <property type="entry name" value="PEPT_TRNA_HYDROL_1"/>
    <property type="match status" value="1"/>
</dbReference>
<dbReference type="PROSITE" id="PS01196">
    <property type="entry name" value="PEPT_TRNA_HYDROL_2"/>
    <property type="match status" value="1"/>
</dbReference>
<name>PTH_ECO55</name>